<reference key="1">
    <citation type="submission" date="2006-12" db="EMBL/GenBank/DDBJ databases">
        <title>Complete sequence of Mycobacterium vanbaalenii PYR-1.</title>
        <authorList>
            <consortium name="US DOE Joint Genome Institute"/>
            <person name="Copeland A."/>
            <person name="Lucas S."/>
            <person name="Lapidus A."/>
            <person name="Barry K."/>
            <person name="Detter J.C."/>
            <person name="Glavina del Rio T."/>
            <person name="Hammon N."/>
            <person name="Israni S."/>
            <person name="Dalin E."/>
            <person name="Tice H."/>
            <person name="Pitluck S."/>
            <person name="Singan V."/>
            <person name="Schmutz J."/>
            <person name="Larimer F."/>
            <person name="Land M."/>
            <person name="Hauser L."/>
            <person name="Kyrpides N."/>
            <person name="Anderson I.J."/>
            <person name="Miller C."/>
            <person name="Richardson P."/>
        </authorList>
    </citation>
    <scope>NUCLEOTIDE SEQUENCE [LARGE SCALE GENOMIC DNA]</scope>
    <source>
        <strain>DSM 7251 / JCM 13017 / BCRC 16820 / KCTC 9966 / NRRL B-24157 / PYR-1</strain>
    </source>
</reference>
<comment type="function">
    <text evidence="1">Na(+)/H(+) antiporter that extrudes sodium in exchange for external protons.</text>
</comment>
<comment type="catalytic activity">
    <reaction evidence="1">
        <text>Na(+)(in) + 2 H(+)(out) = Na(+)(out) + 2 H(+)(in)</text>
        <dbReference type="Rhea" id="RHEA:29251"/>
        <dbReference type="ChEBI" id="CHEBI:15378"/>
        <dbReference type="ChEBI" id="CHEBI:29101"/>
    </reaction>
    <physiologicalReaction direction="left-to-right" evidence="1">
        <dbReference type="Rhea" id="RHEA:29252"/>
    </physiologicalReaction>
</comment>
<comment type="subcellular location">
    <subcellularLocation>
        <location evidence="1">Cell membrane</location>
        <topology evidence="1">Multi-pass membrane protein</topology>
    </subcellularLocation>
</comment>
<comment type="similarity">
    <text evidence="1">Belongs to the NhaA Na(+)/H(+) (TC 2.A.33) antiporter family.</text>
</comment>
<organism>
    <name type="scientific">Mycolicibacterium vanbaalenii (strain DSM 7251 / JCM 13017 / BCRC 16820 / KCTC 9966 / NRRL B-24157 / PYR-1)</name>
    <name type="common">Mycobacterium vanbaalenii</name>
    <dbReference type="NCBI Taxonomy" id="350058"/>
    <lineage>
        <taxon>Bacteria</taxon>
        <taxon>Bacillati</taxon>
        <taxon>Actinomycetota</taxon>
        <taxon>Actinomycetes</taxon>
        <taxon>Mycobacteriales</taxon>
        <taxon>Mycobacteriaceae</taxon>
        <taxon>Mycolicibacterium</taxon>
    </lineage>
</organism>
<accession>A1T7Y9</accession>
<name>NHAA2_MYCVP</name>
<feature type="chain" id="PRO_0000334342" description="Na(+)/H(+) antiporter NhaA 2">
    <location>
        <begin position="1"/>
        <end position="464"/>
    </location>
</feature>
<feature type="transmembrane region" description="Helical" evidence="1">
    <location>
        <begin position="53"/>
        <end position="73"/>
    </location>
</feature>
<feature type="transmembrane region" description="Helical" evidence="1">
    <location>
        <begin position="96"/>
        <end position="116"/>
    </location>
</feature>
<feature type="transmembrane region" description="Helical" evidence="1">
    <location>
        <begin position="134"/>
        <end position="154"/>
    </location>
</feature>
<feature type="transmembrane region" description="Helical" evidence="1">
    <location>
        <begin position="165"/>
        <end position="185"/>
    </location>
</feature>
<feature type="transmembrane region" description="Helical" evidence="1">
    <location>
        <begin position="195"/>
        <end position="215"/>
    </location>
</feature>
<feature type="transmembrane region" description="Helical" evidence="1">
    <location>
        <begin position="219"/>
        <end position="239"/>
    </location>
</feature>
<feature type="transmembrane region" description="Helical" evidence="1">
    <location>
        <begin position="257"/>
        <end position="277"/>
    </location>
</feature>
<feature type="transmembrane region" description="Helical" evidence="1">
    <location>
        <begin position="313"/>
        <end position="333"/>
    </location>
</feature>
<feature type="transmembrane region" description="Helical" evidence="1">
    <location>
        <begin position="340"/>
        <end position="360"/>
    </location>
</feature>
<feature type="transmembrane region" description="Helical" evidence="1">
    <location>
        <begin position="378"/>
        <end position="398"/>
    </location>
</feature>
<feature type="transmembrane region" description="Helical" evidence="1">
    <location>
        <begin position="412"/>
        <end position="432"/>
    </location>
</feature>
<dbReference type="EMBL" id="CP000511">
    <property type="protein sequence ID" value="ABM13289.1"/>
    <property type="molecule type" value="Genomic_DNA"/>
</dbReference>
<dbReference type="SMR" id="A1T7Y9"/>
<dbReference type="STRING" id="350058.Mvan_2476"/>
<dbReference type="KEGG" id="mva:Mvan_2476"/>
<dbReference type="eggNOG" id="COG3004">
    <property type="taxonomic scope" value="Bacteria"/>
</dbReference>
<dbReference type="HOGENOM" id="CLU_015803_0_0_11"/>
<dbReference type="Proteomes" id="UP000009159">
    <property type="component" value="Chromosome"/>
</dbReference>
<dbReference type="GO" id="GO:0005886">
    <property type="term" value="C:plasma membrane"/>
    <property type="evidence" value="ECO:0007669"/>
    <property type="project" value="UniProtKB-SubCell"/>
</dbReference>
<dbReference type="GO" id="GO:0015385">
    <property type="term" value="F:sodium:proton antiporter activity"/>
    <property type="evidence" value="ECO:0007669"/>
    <property type="project" value="TreeGrafter"/>
</dbReference>
<dbReference type="GO" id="GO:0006885">
    <property type="term" value="P:regulation of pH"/>
    <property type="evidence" value="ECO:0007669"/>
    <property type="project" value="InterPro"/>
</dbReference>
<dbReference type="Gene3D" id="1.20.1530.10">
    <property type="entry name" value="Na+/H+ antiporter like domain"/>
    <property type="match status" value="1"/>
</dbReference>
<dbReference type="HAMAP" id="MF_01844">
    <property type="entry name" value="NhaA"/>
    <property type="match status" value="1"/>
</dbReference>
<dbReference type="InterPro" id="IPR023171">
    <property type="entry name" value="Na/H_antiporter_dom_sf"/>
</dbReference>
<dbReference type="InterPro" id="IPR004670">
    <property type="entry name" value="NhaA"/>
</dbReference>
<dbReference type="NCBIfam" id="TIGR00773">
    <property type="entry name" value="NhaA"/>
    <property type="match status" value="1"/>
</dbReference>
<dbReference type="PANTHER" id="PTHR30341:SF0">
    <property type="entry name" value="NA(+)_H(+) ANTIPORTER NHAA"/>
    <property type="match status" value="1"/>
</dbReference>
<dbReference type="PANTHER" id="PTHR30341">
    <property type="entry name" value="SODIUM ION/PROTON ANTIPORTER NHAA-RELATED"/>
    <property type="match status" value="1"/>
</dbReference>
<dbReference type="Pfam" id="PF06965">
    <property type="entry name" value="Na_H_antiport_1"/>
    <property type="match status" value="1"/>
</dbReference>
<evidence type="ECO:0000255" key="1">
    <source>
        <dbReference type="HAMAP-Rule" id="MF_01844"/>
    </source>
</evidence>
<gene>
    <name evidence="1" type="primary">nhaA2</name>
    <name type="ordered locus">Mvan_2476</name>
</gene>
<keyword id="KW-0050">Antiport</keyword>
<keyword id="KW-1003">Cell membrane</keyword>
<keyword id="KW-0406">Ion transport</keyword>
<keyword id="KW-0472">Membrane</keyword>
<keyword id="KW-0915">Sodium</keyword>
<keyword id="KW-0739">Sodium transport</keyword>
<keyword id="KW-0812">Transmembrane</keyword>
<keyword id="KW-1133">Transmembrane helix</keyword>
<keyword id="KW-0813">Transport</keyword>
<protein>
    <recommendedName>
        <fullName evidence="1">Na(+)/H(+) antiporter NhaA 2</fullName>
    </recommendedName>
    <alternativeName>
        <fullName evidence="1">Sodium/proton antiporter NhaA 2</fullName>
    </alternativeName>
</protein>
<sequence>MCREDWSASIRRRPVRQAVTSDPRARRIRRALLARGSWSETNRVTEILRKETVGGIILLVAAAAALIWANSPWSQSYFALRDFELGGEWLGLHLNLTLGAWAADGLLAIFFLVVGLELKREFVAGDLRDPSRAALPIAAAVGGMVVPALIFVLVNLNTGDGALRGWAIPTATDIAFAVAVLAVISTHLPSALRTFLLTLAVVDDLLAITVIAVFYTDDIKAWALALAVVPLALFTVCAQRGVQKWWLLVPLSVATWVLVHESGVHATVAGVLLGFAVPVHRSATRRGQQVDHAERVGMAEYFEHRVRPISAGIAIPVFAFFAAGVSIGGLSGLSRALGDPITLGIVLGLVAGKPIGILVTTRVLSAVTRASLDSSLRWVDVLGMSMLAGIGFTVSLLIGDLAFGMGSERDEFVKIGVLSGSLLAASLAAIVLLTRNRAYRRIHREETADDDHDGVPDVYQTRQD</sequence>
<proteinExistence type="inferred from homology"/>